<organism>
    <name type="scientific">Oryctolagus cuniculus</name>
    <name type="common">Rabbit</name>
    <dbReference type="NCBI Taxonomy" id="9986"/>
    <lineage>
        <taxon>Eukaryota</taxon>
        <taxon>Metazoa</taxon>
        <taxon>Chordata</taxon>
        <taxon>Craniata</taxon>
        <taxon>Vertebrata</taxon>
        <taxon>Euteleostomi</taxon>
        <taxon>Mammalia</taxon>
        <taxon>Eutheria</taxon>
        <taxon>Euarchontoglires</taxon>
        <taxon>Glires</taxon>
        <taxon>Lagomorpha</taxon>
        <taxon>Leporidae</taxon>
        <taxon>Oryctolagus</taxon>
    </lineage>
</organism>
<feature type="initiator methionine" description="Removed" evidence="1">
    <location>
        <position position="1"/>
    </location>
</feature>
<feature type="chain" id="PRO_0000122934" description="DNA repair protein RAD51 homolog 1">
    <location>
        <begin position="2"/>
        <end position="339"/>
    </location>
</feature>
<feature type="domain" description="HhH">
    <location>
        <begin position="48"/>
        <end position="77"/>
    </location>
</feature>
<feature type="region of interest" description="Disordered" evidence="4">
    <location>
        <begin position="1"/>
        <end position="24"/>
    </location>
</feature>
<feature type="region of interest" description="Interaction with PALB2" evidence="1">
    <location>
        <begin position="184"/>
        <end position="257"/>
    </location>
</feature>
<feature type="short sequence motif" description="Nuclear export signal; masked by the interaction with BRCA2" evidence="1">
    <location>
        <begin position="245"/>
        <end position="260"/>
    </location>
</feature>
<feature type="binding site" evidence="3">
    <location>
        <begin position="127"/>
        <end position="134"/>
    </location>
    <ligand>
        <name>ATP</name>
        <dbReference type="ChEBI" id="CHEBI:30616"/>
    </ligand>
</feature>
<feature type="modified residue" description="N-acetylalanine" evidence="1">
    <location>
        <position position="2"/>
    </location>
</feature>
<feature type="modified residue" description="Phosphothreonine" evidence="1">
    <location>
        <position position="13"/>
    </location>
</feature>
<feature type="modified residue" description="Phosphoserine" evidence="1">
    <location>
        <position position="14"/>
    </location>
</feature>
<feature type="modified residue" description="Phosphotyrosine; by ABL1" evidence="1">
    <location>
        <position position="54"/>
    </location>
</feature>
<feature type="modified residue" description="Phosphothreonine; by CHEK1" evidence="1">
    <location>
        <position position="309"/>
    </location>
</feature>
<feature type="cross-link" description="Glycyl lysine isopeptide (Lys-Gly) (interchain with G-Cter in ubiquitin)" evidence="1">
    <location>
        <position position="58"/>
    </location>
</feature>
<feature type="cross-link" description="Glycyl lysine isopeptide (Lys-Gly) (interchain with G-Cter in ubiquitin)" evidence="1">
    <location>
        <position position="64"/>
    </location>
</feature>
<evidence type="ECO:0000250" key="1">
    <source>
        <dbReference type="UniProtKB" id="Q06609"/>
    </source>
</evidence>
<evidence type="ECO:0000250" key="2">
    <source>
        <dbReference type="UniProtKB" id="Q08297"/>
    </source>
</evidence>
<evidence type="ECO:0000255" key="3"/>
<evidence type="ECO:0000256" key="4">
    <source>
        <dbReference type="SAM" id="MobiDB-lite"/>
    </source>
</evidence>
<evidence type="ECO:0000305" key="5"/>
<protein>
    <recommendedName>
        <fullName>DNA repair protein RAD51 homolog 1</fullName>
    </recommendedName>
</protein>
<accession>O77507</accession>
<keyword id="KW-0007">Acetylation</keyword>
<keyword id="KW-0067">ATP-binding</keyword>
<keyword id="KW-0158">Chromosome</keyword>
<keyword id="KW-0963">Cytoplasm</keyword>
<keyword id="KW-0206">Cytoskeleton</keyword>
<keyword id="KW-0227">DNA damage</keyword>
<keyword id="KW-0233">DNA recombination</keyword>
<keyword id="KW-0234">DNA repair</keyword>
<keyword id="KW-0238">DNA-binding</keyword>
<keyword id="KW-1017">Isopeptide bond</keyword>
<keyword id="KW-0496">Mitochondrion</keyword>
<keyword id="KW-0547">Nucleotide-binding</keyword>
<keyword id="KW-0539">Nucleus</keyword>
<keyword id="KW-0597">Phosphoprotein</keyword>
<keyword id="KW-1185">Reference proteome</keyword>
<keyword id="KW-0832">Ubl conjugation</keyword>
<name>RAD51_RABIT</name>
<reference key="1">
    <citation type="journal article" date="1998" name="Immunogenetics">
        <title>High RAD51 mRNA levels in young rabbit appendix. A role in B-cell gene conversion?</title>
        <authorList>
            <person name="Schiaffella E."/>
            <person name="Fuschiotti P."/>
            <person name="Bensinger S.J."/>
            <person name="Mage R.G."/>
        </authorList>
    </citation>
    <scope>NUCLEOTIDE SEQUENCE [MRNA]</scope>
    <source>
        <tissue>Thymus</tissue>
    </source>
</reference>
<comment type="function">
    <text evidence="1">Plays an important role in homologous strand exchange, a key step in DNA repair through homologous recombination (HR). Binds to single-stranded DNA in an ATP-dependent manner to form nucleoprotein filaments which are essential for the homology search and strand exchange. Catalyzes the recognition of homology and strand exchange between homologous DNA partners to form a joint molecule between a processed DNA break and the repair template. Recruited to resolve stalled replication forks during replication stress. Part of a PALB2-scaffolded HR complex containing BRCA2 and RAD51C and which is thought to play a role in DNA repair by HR. Plays a role in regulating mitochondrial DNA copy number under conditions of oxidative stress in the presence of RAD51C and XRCC3. Also involved in interstrand cross-link repair.</text>
</comment>
<comment type="subunit">
    <text evidence="1 2">Forms linear homooligomers, giving rise to a RAD51 nucleoprotein filament, which is essential for strand-pairing reactions during DNA recombination. Interacts with BRCA1 and either directly or indirectly with p53. Interacts with XRCC3, RAD54L and RAD54B. Interacts with the BCDX2 subcomplex RAD51C:RAD51B. Component of the homologous recombination repair (HR) complex composed of ERCC5/XPG, BRCA2, PALB2, DSS1 and RAD51. Interacts directly with PALB2 which may serve as a scaffold for a HR complex containing PALB2, BRCA2, RAD51C, RAD51 and XRCC3. Interacts with RAD51AP1 and RAD51AP2. Interacts with CHEK1, and this may require prior phosphorylation of CHEK1. Interacts with the MND1-PSMC3IP heterodimer. Found in a complex, at least composed of BLM, RAD51 and SPIDR; the complex formation is mediated by SPIDR. Interacts with SPIDR; the interaction is direct and recruits RAD51 to DNA damage sites. Interacts with FIGNL1 (via N-terminal one-half region); the interaction is direct. Interacts with RAD51AP1 (via C-terminal region); the interaction is direct. Interacts with NABP2, RPA1, PALB2 and RAD51. Interacts with SWI5/C9orf119, and at lower level with SFR1/MEIR5. Interacts with hyperphosphorylated RPA2; this interaction is necessary for efficient recruitment to chromatin in response to DNA damage. Interacts with SWSAP1; involved in homologous recombination repair. Interacts with PARPBP, BRCA2 and RECQL5; these interactions interfere with the formation of the RAD51-DNA homologous recombination structure. Interacts with POLQ; POLQ acts as an inhibitor of homology-recombination repair (HR) pathway by limiting RAD51 accumulation at resected ends. Interacts with FBH1. Interacts with POLN. Interacts with RFWD3. Interacts with the MCM8-MCM9 complex; the interaction recruits RAD51 to DNA damage sites (By similarity). Component of a multiprotein complex with MEIOB and SPATA22. Interacts with the complex BRME1:HSF2BP:BRCA2 (By similarity). Interacts with HELQ; stimulating HELQ DNA helicase activity and ability to unwing DNA. Interacts with MMS22L; the interaction is direct and promotes recruitment of RAD51 to sites of DNA damage. Interacts with the ATAD5 RFC-like complex. Within the ATAD5 RFC-like complex, interacts with ATAD5 (via N-terminus); the interaction is direct and enhanced under replication stress. Interacts with WDR48; the interaction is enhanced under replication stress (By similarity). Interacts with DNA helicase ZGRF1; the interaction promotes RAD51 strand exchange activity (By similarity). Interacts (when phosphorylated) with TOPBP1; interaction takes place following phosphorylation by CK2 and PLK1 and promotes recruitment to DNA damage sites (By similarity). Interacts with GRB2; this interaction inhibits RAD51 ATPase activity to stabilize RAD51 on stalled replication forks (By similarity).</text>
</comment>
<comment type="subcellular location">
    <subcellularLocation>
        <location evidence="1">Nucleus</location>
    </subcellularLocation>
    <subcellularLocation>
        <location evidence="1">Cytoplasm</location>
    </subcellularLocation>
    <subcellularLocation>
        <location evidence="1">Cytoplasm</location>
        <location evidence="1">Perinuclear region</location>
    </subcellularLocation>
    <subcellularLocation>
        <location evidence="1">Mitochondrion matrix</location>
    </subcellularLocation>
    <subcellularLocation>
        <location evidence="1">Chromosome</location>
    </subcellularLocation>
    <subcellularLocation>
        <location evidence="1">Cytoplasm</location>
        <location evidence="1">Cytoskeleton</location>
        <location evidence="1">Microtubule organizing center</location>
        <location evidence="1">Centrosome</location>
    </subcellularLocation>
    <text evidence="1">Colocalizes with RAD51AP1 and RPA2 to multiple nuclear foci upon induction of DNA damage. DNA damage induces an increase in nuclear levels. Together with FIGNL1, redistributed in discrete nuclear DNA damage-induced foci after ionizing radiation (IR) or camptothecin (CPT) treatment. Accumulated at sites of DNA damage in a SPIDR-dependent manner. Recruited at sites of DNA damage in a MCM9-MCM8-dependent manner. Recruited at sites of DNA damage following interaction with TOPBP1 in S-phase. Colocalizes with ERCC5/XPG to nuclear foci in S phase (By similarity).</text>
</comment>
<comment type="PTM">
    <text evidence="1">Ubiquitinated by the SCF(FBH1) E3 ubiquitin ligase complex, regulating RAD51 subcellular location and preventing its association with DNA. Ubiquitinated by RFWD3 in response to DNA damage: ubiquitination leads to degradation by the proteasome, promoting homologous recombination.</text>
</comment>
<comment type="PTM">
    <text evidence="1">Phosphorylation of Thr-309 by CHEK1 may enhance association with chromatin at sites of DNA damage and promote DNA repair by homologous recombination. Phosphorylated at Ser-14 by PLK1, triggering phosphorylation at Thr-13 by CK2, thereby promoting interaction with TOPBP1 and recruitment to DNA damage sites during S-phase. Phosphorylation by ABL1 inhibits function.</text>
</comment>
<comment type="similarity">
    <text evidence="5">Belongs to the RecA family. RAD51 subfamily.</text>
</comment>
<dbReference type="EMBL" id="AF017729">
    <property type="protein sequence ID" value="AAC28561.1"/>
    <property type="molecule type" value="mRNA"/>
</dbReference>
<dbReference type="RefSeq" id="NP_001075493.1">
    <property type="nucleotide sequence ID" value="NM_001082024.1"/>
</dbReference>
<dbReference type="BMRB" id="O77507"/>
<dbReference type="SMR" id="O77507"/>
<dbReference type="STRING" id="9986.ENSOCUP00000014527"/>
<dbReference type="PaxDb" id="9986-ENSOCUP00000014527"/>
<dbReference type="GeneID" id="100008661"/>
<dbReference type="KEGG" id="ocu:100008661"/>
<dbReference type="CTD" id="5888"/>
<dbReference type="eggNOG" id="KOG1433">
    <property type="taxonomic scope" value="Eukaryota"/>
</dbReference>
<dbReference type="InParanoid" id="O77507"/>
<dbReference type="OrthoDB" id="10251254at2759"/>
<dbReference type="Proteomes" id="UP000001811">
    <property type="component" value="Unplaced"/>
</dbReference>
<dbReference type="GO" id="GO:0005813">
    <property type="term" value="C:centrosome"/>
    <property type="evidence" value="ECO:0007669"/>
    <property type="project" value="UniProtKB-SubCell"/>
</dbReference>
<dbReference type="GO" id="GO:0005694">
    <property type="term" value="C:chromosome"/>
    <property type="evidence" value="ECO:0000250"/>
    <property type="project" value="UniProtKB"/>
</dbReference>
<dbReference type="GO" id="GO:0000794">
    <property type="term" value="C:condensed nuclear chromosome"/>
    <property type="evidence" value="ECO:0007669"/>
    <property type="project" value="TreeGrafter"/>
</dbReference>
<dbReference type="GO" id="GO:0005737">
    <property type="term" value="C:cytoplasm"/>
    <property type="evidence" value="ECO:0000250"/>
    <property type="project" value="UniProtKB"/>
</dbReference>
<dbReference type="GO" id="GO:0005759">
    <property type="term" value="C:mitochondrial matrix"/>
    <property type="evidence" value="ECO:0007669"/>
    <property type="project" value="UniProtKB-SubCell"/>
</dbReference>
<dbReference type="GO" id="GO:0000228">
    <property type="term" value="C:nuclear chromosome"/>
    <property type="evidence" value="ECO:0000250"/>
    <property type="project" value="UniProtKB"/>
</dbReference>
<dbReference type="GO" id="GO:0005634">
    <property type="term" value="C:nucleus"/>
    <property type="evidence" value="ECO:0000250"/>
    <property type="project" value="UniProtKB"/>
</dbReference>
<dbReference type="GO" id="GO:0048471">
    <property type="term" value="C:perinuclear region of cytoplasm"/>
    <property type="evidence" value="ECO:0000250"/>
    <property type="project" value="UniProtKB"/>
</dbReference>
<dbReference type="GO" id="GO:0035861">
    <property type="term" value="C:site of double-strand break"/>
    <property type="evidence" value="ECO:0000250"/>
    <property type="project" value="UniProtKB"/>
</dbReference>
<dbReference type="GO" id="GO:0005524">
    <property type="term" value="F:ATP binding"/>
    <property type="evidence" value="ECO:0007669"/>
    <property type="project" value="UniProtKB-KW"/>
</dbReference>
<dbReference type="GO" id="GO:0016887">
    <property type="term" value="F:ATP hydrolysis activity"/>
    <property type="evidence" value="ECO:0007669"/>
    <property type="project" value="InterPro"/>
</dbReference>
<dbReference type="GO" id="GO:0140664">
    <property type="term" value="F:ATP-dependent DNA damage sensor activity"/>
    <property type="evidence" value="ECO:0007669"/>
    <property type="project" value="InterPro"/>
</dbReference>
<dbReference type="GO" id="GO:0000150">
    <property type="term" value="F:DNA strand exchange activity"/>
    <property type="evidence" value="ECO:0007669"/>
    <property type="project" value="InterPro"/>
</dbReference>
<dbReference type="GO" id="GO:0003690">
    <property type="term" value="F:double-stranded DNA binding"/>
    <property type="evidence" value="ECO:0000250"/>
    <property type="project" value="UniProtKB"/>
</dbReference>
<dbReference type="GO" id="GO:0003697">
    <property type="term" value="F:single-stranded DNA binding"/>
    <property type="evidence" value="ECO:0000250"/>
    <property type="project" value="UniProtKB"/>
</dbReference>
<dbReference type="GO" id="GO:0017116">
    <property type="term" value="F:single-stranded DNA helicase activity"/>
    <property type="evidence" value="ECO:0000250"/>
    <property type="project" value="UniProtKB"/>
</dbReference>
<dbReference type="GO" id="GO:0072757">
    <property type="term" value="P:cellular response to camptothecin"/>
    <property type="evidence" value="ECO:0000250"/>
    <property type="project" value="UniProtKB"/>
</dbReference>
<dbReference type="GO" id="GO:0071479">
    <property type="term" value="P:cellular response to ionizing radiation"/>
    <property type="evidence" value="ECO:0000250"/>
    <property type="project" value="UniProtKB"/>
</dbReference>
<dbReference type="GO" id="GO:0070192">
    <property type="term" value="P:chromosome organization involved in meiotic cell cycle"/>
    <property type="evidence" value="ECO:0007669"/>
    <property type="project" value="TreeGrafter"/>
</dbReference>
<dbReference type="GO" id="GO:0006974">
    <property type="term" value="P:DNA damage response"/>
    <property type="evidence" value="ECO:0000250"/>
    <property type="project" value="UniProtKB"/>
</dbReference>
<dbReference type="GO" id="GO:0000730">
    <property type="term" value="P:DNA recombinase assembly"/>
    <property type="evidence" value="ECO:0000250"/>
    <property type="project" value="UniProtKB"/>
</dbReference>
<dbReference type="GO" id="GO:0042148">
    <property type="term" value="P:DNA strand invasion"/>
    <property type="evidence" value="ECO:0007669"/>
    <property type="project" value="TreeGrafter"/>
</dbReference>
<dbReference type="GO" id="GO:0000724">
    <property type="term" value="P:double-strand break repair via homologous recombination"/>
    <property type="evidence" value="ECO:0000250"/>
    <property type="project" value="UniProtKB"/>
</dbReference>
<dbReference type="GO" id="GO:0036297">
    <property type="term" value="P:interstrand cross-link repair"/>
    <property type="evidence" value="ECO:0000250"/>
    <property type="project" value="UniProtKB"/>
</dbReference>
<dbReference type="GO" id="GO:0006312">
    <property type="term" value="P:mitotic recombination"/>
    <property type="evidence" value="ECO:0007669"/>
    <property type="project" value="TreeGrafter"/>
</dbReference>
<dbReference type="GO" id="GO:1990426">
    <property type="term" value="P:mitotic recombination-dependent replication fork processing"/>
    <property type="evidence" value="ECO:0007669"/>
    <property type="project" value="InterPro"/>
</dbReference>
<dbReference type="GO" id="GO:0007131">
    <property type="term" value="P:reciprocal meiotic recombination"/>
    <property type="evidence" value="ECO:0007669"/>
    <property type="project" value="TreeGrafter"/>
</dbReference>
<dbReference type="GO" id="GO:0010569">
    <property type="term" value="P:regulation of double-strand break repair via homologous recombination"/>
    <property type="evidence" value="ECO:0000250"/>
    <property type="project" value="UniProtKB"/>
</dbReference>
<dbReference type="CDD" id="cd19513">
    <property type="entry name" value="Rad51"/>
    <property type="match status" value="1"/>
</dbReference>
<dbReference type="FunFam" id="1.10.150.20:FF:000029">
    <property type="entry name" value="DNA repair protein RAD51 homolog"/>
    <property type="match status" value="1"/>
</dbReference>
<dbReference type="FunFam" id="3.40.50.300:FF:000092">
    <property type="entry name" value="DNA repair protein Rad51 homolog"/>
    <property type="match status" value="1"/>
</dbReference>
<dbReference type="Gene3D" id="1.10.150.20">
    <property type="entry name" value="5' to 3' exonuclease, C-terminal subdomain"/>
    <property type="match status" value="1"/>
</dbReference>
<dbReference type="Gene3D" id="3.40.50.300">
    <property type="entry name" value="P-loop containing nucleotide triphosphate hydrolases"/>
    <property type="match status" value="1"/>
</dbReference>
<dbReference type="InterPro" id="IPR003593">
    <property type="entry name" value="AAA+_ATPase"/>
</dbReference>
<dbReference type="InterPro" id="IPR011941">
    <property type="entry name" value="DNA_recomb/repair_Rad51"/>
</dbReference>
<dbReference type="InterPro" id="IPR013632">
    <property type="entry name" value="DNA_recomb/repair_Rad51_C"/>
</dbReference>
<dbReference type="InterPro" id="IPR016467">
    <property type="entry name" value="DNA_recomb/repair_RecA-like"/>
</dbReference>
<dbReference type="InterPro" id="IPR010995">
    <property type="entry name" value="DNA_repair_Rad51/TF_NusA_a-hlx"/>
</dbReference>
<dbReference type="InterPro" id="IPR027417">
    <property type="entry name" value="P-loop_NTPase"/>
</dbReference>
<dbReference type="InterPro" id="IPR020588">
    <property type="entry name" value="RecA_ATP-bd"/>
</dbReference>
<dbReference type="InterPro" id="IPR020587">
    <property type="entry name" value="RecA_monomer-monomer_interface"/>
</dbReference>
<dbReference type="NCBIfam" id="NF003301">
    <property type="entry name" value="PRK04301.1"/>
    <property type="match status" value="1"/>
</dbReference>
<dbReference type="NCBIfam" id="TIGR02239">
    <property type="entry name" value="recomb_RAD51"/>
    <property type="match status" value="1"/>
</dbReference>
<dbReference type="PANTHER" id="PTHR22942:SF39">
    <property type="entry name" value="DNA REPAIR PROTEIN RAD51 HOMOLOG 1"/>
    <property type="match status" value="1"/>
</dbReference>
<dbReference type="PANTHER" id="PTHR22942">
    <property type="entry name" value="RECA/RAD51/RADA DNA STRAND-PAIRING FAMILY MEMBER"/>
    <property type="match status" value="1"/>
</dbReference>
<dbReference type="Pfam" id="PF14520">
    <property type="entry name" value="HHH_5"/>
    <property type="match status" value="1"/>
</dbReference>
<dbReference type="Pfam" id="PF08423">
    <property type="entry name" value="Rad51"/>
    <property type="match status" value="1"/>
</dbReference>
<dbReference type="PIRSF" id="PIRSF005856">
    <property type="entry name" value="Rad51"/>
    <property type="match status" value="1"/>
</dbReference>
<dbReference type="SMART" id="SM00382">
    <property type="entry name" value="AAA"/>
    <property type="match status" value="1"/>
</dbReference>
<dbReference type="SUPFAM" id="SSF52540">
    <property type="entry name" value="P-loop containing nucleoside triphosphate hydrolases"/>
    <property type="match status" value="1"/>
</dbReference>
<dbReference type="SUPFAM" id="SSF47794">
    <property type="entry name" value="Rad51 N-terminal domain-like"/>
    <property type="match status" value="1"/>
</dbReference>
<dbReference type="PROSITE" id="PS50162">
    <property type="entry name" value="RECA_2"/>
    <property type="match status" value="1"/>
</dbReference>
<dbReference type="PROSITE" id="PS50163">
    <property type="entry name" value="RECA_3"/>
    <property type="match status" value="1"/>
</dbReference>
<gene>
    <name type="primary">RAD51</name>
</gene>
<proteinExistence type="evidence at transcript level"/>
<sequence length="339" mass="37028">MAMQMQLEANADTSVEEESFGPQPVSRLEQCGINANDVKKLEEAGFHTEEAVAYAPKKELINIKGISEAKADKILTEAAKLVPMGFTTATEFHQRRSEIIQITTGSKELDKLLQGGIETGSITEMFGEFRTGKTQICHTLAVTCQLPIDRGGGEGKAMYIDTEGTFRPERLLAVAERYGLSGSDVLDNVAYARGFNTDHQTQLLYQASAMMVESRYALLIVDSATALYRTDYSGRGELSARQMHLARFLRMLLRLADEFGVTVVITNQVVAQVDGAAMFAADPKKPIGGNIIAHASTTRLYLRKGRGETRICKIYDSPCLPEAEAMFAINADGVGDAKD</sequence>